<feature type="chain" id="PRO_1000054119" description="Cyclic pyranopterin monophosphate synthase">
    <location>
        <begin position="1"/>
        <end position="160"/>
    </location>
</feature>
<feature type="active site" evidence="1">
    <location>
        <position position="125"/>
    </location>
</feature>
<feature type="binding site" evidence="1">
    <location>
        <begin position="73"/>
        <end position="75"/>
    </location>
    <ligand>
        <name>substrate</name>
    </ligand>
</feature>
<feature type="binding site" evidence="1">
    <location>
        <begin position="110"/>
        <end position="111"/>
    </location>
    <ligand>
        <name>substrate</name>
    </ligand>
</feature>
<sequence length="160" mass="17338">MLTHLDSQGRANMVDVTEKAVTSREATAEAVVRMRPETLQLIQDGGHPKGDVFAVARIAGIQAAKRTHELIPLCHPLLLTSVKLELQAEAPDAVRIRARCRLAGQTGVEMEALTAASVAALTIYDMCKAVDRGMVIEQVQLLEKLGGKSGHYRKEEEGQA</sequence>
<keyword id="KW-0456">Lyase</keyword>
<keyword id="KW-0501">Molybdenum cofactor biosynthesis</keyword>
<gene>
    <name evidence="1" type="primary">moaC</name>
    <name type="ordered locus">PA14_13230</name>
</gene>
<protein>
    <recommendedName>
        <fullName evidence="1">Cyclic pyranopterin monophosphate synthase</fullName>
        <ecNumber evidence="1">4.6.1.17</ecNumber>
    </recommendedName>
    <alternativeName>
        <fullName evidence="1">Molybdenum cofactor biosynthesis protein C</fullName>
    </alternativeName>
</protein>
<reference key="1">
    <citation type="journal article" date="2006" name="Genome Biol.">
        <title>Genomic analysis reveals that Pseudomonas aeruginosa virulence is combinatorial.</title>
        <authorList>
            <person name="Lee D.G."/>
            <person name="Urbach J.M."/>
            <person name="Wu G."/>
            <person name="Liberati N.T."/>
            <person name="Feinbaum R.L."/>
            <person name="Miyata S."/>
            <person name="Diggins L.T."/>
            <person name="He J."/>
            <person name="Saucier M."/>
            <person name="Deziel E."/>
            <person name="Friedman L."/>
            <person name="Li L."/>
            <person name="Grills G."/>
            <person name="Montgomery K."/>
            <person name="Kucherlapati R."/>
            <person name="Rahme L.G."/>
            <person name="Ausubel F.M."/>
        </authorList>
    </citation>
    <scope>NUCLEOTIDE SEQUENCE [LARGE SCALE GENOMIC DNA]</scope>
    <source>
        <strain>UCBPP-PA14</strain>
    </source>
</reference>
<evidence type="ECO:0000255" key="1">
    <source>
        <dbReference type="HAMAP-Rule" id="MF_01224"/>
    </source>
</evidence>
<accession>Q02S84</accession>
<dbReference type="EC" id="4.6.1.17" evidence="1"/>
<dbReference type="EMBL" id="CP000438">
    <property type="protein sequence ID" value="ABJ13191.1"/>
    <property type="molecule type" value="Genomic_DNA"/>
</dbReference>
<dbReference type="RefSeq" id="WP_003093030.1">
    <property type="nucleotide sequence ID" value="NZ_CP034244.1"/>
</dbReference>
<dbReference type="SMR" id="Q02S84"/>
<dbReference type="KEGG" id="pau:PA14_13230"/>
<dbReference type="PseudoCAP" id="PA14_13230"/>
<dbReference type="HOGENOM" id="CLU_074693_1_1_6"/>
<dbReference type="BioCyc" id="PAER208963:G1G74-1093-MONOMER"/>
<dbReference type="UniPathway" id="UPA00344"/>
<dbReference type="Proteomes" id="UP000000653">
    <property type="component" value="Chromosome"/>
</dbReference>
<dbReference type="GO" id="GO:0061799">
    <property type="term" value="F:cyclic pyranopterin monophosphate synthase activity"/>
    <property type="evidence" value="ECO:0007669"/>
    <property type="project" value="UniProtKB-UniRule"/>
</dbReference>
<dbReference type="GO" id="GO:0006777">
    <property type="term" value="P:Mo-molybdopterin cofactor biosynthetic process"/>
    <property type="evidence" value="ECO:0007669"/>
    <property type="project" value="UniProtKB-UniRule"/>
</dbReference>
<dbReference type="CDD" id="cd01420">
    <property type="entry name" value="MoaC_PE"/>
    <property type="match status" value="1"/>
</dbReference>
<dbReference type="FunFam" id="3.30.70.640:FF:000001">
    <property type="entry name" value="Cyclic pyranopterin monophosphate synthase"/>
    <property type="match status" value="1"/>
</dbReference>
<dbReference type="Gene3D" id="3.30.70.640">
    <property type="entry name" value="Molybdopterin cofactor biosynthesis C (MoaC) domain"/>
    <property type="match status" value="1"/>
</dbReference>
<dbReference type="HAMAP" id="MF_01224_B">
    <property type="entry name" value="MoaC_B"/>
    <property type="match status" value="1"/>
</dbReference>
<dbReference type="InterPro" id="IPR023045">
    <property type="entry name" value="MoaC"/>
</dbReference>
<dbReference type="InterPro" id="IPR047594">
    <property type="entry name" value="MoaC_bact/euk"/>
</dbReference>
<dbReference type="InterPro" id="IPR036522">
    <property type="entry name" value="MoaC_sf"/>
</dbReference>
<dbReference type="InterPro" id="IPR050105">
    <property type="entry name" value="MoCo_biosynth_MoaA/MoaC"/>
</dbReference>
<dbReference type="InterPro" id="IPR002820">
    <property type="entry name" value="Mopterin_CF_biosynth-C_dom"/>
</dbReference>
<dbReference type="NCBIfam" id="TIGR00581">
    <property type="entry name" value="moaC"/>
    <property type="match status" value="1"/>
</dbReference>
<dbReference type="NCBIfam" id="NF006870">
    <property type="entry name" value="PRK09364.1"/>
    <property type="match status" value="1"/>
</dbReference>
<dbReference type="PANTHER" id="PTHR22960:SF29">
    <property type="entry name" value="CYCLIC PYRANOPTERIN MONOPHOSPHATE SYNTHASE"/>
    <property type="match status" value="1"/>
</dbReference>
<dbReference type="PANTHER" id="PTHR22960">
    <property type="entry name" value="MOLYBDOPTERIN COFACTOR SYNTHESIS PROTEIN A"/>
    <property type="match status" value="1"/>
</dbReference>
<dbReference type="Pfam" id="PF01967">
    <property type="entry name" value="MoaC"/>
    <property type="match status" value="1"/>
</dbReference>
<dbReference type="SUPFAM" id="SSF55040">
    <property type="entry name" value="Molybdenum cofactor biosynthesis protein C, MoaC"/>
    <property type="match status" value="1"/>
</dbReference>
<proteinExistence type="inferred from homology"/>
<comment type="function">
    <text evidence="1">Catalyzes the conversion of (8S)-3',8-cyclo-7,8-dihydroguanosine 5'-triphosphate to cyclic pyranopterin monophosphate (cPMP).</text>
</comment>
<comment type="catalytic activity">
    <reaction evidence="1">
        <text>(8S)-3',8-cyclo-7,8-dihydroguanosine 5'-triphosphate = cyclic pyranopterin phosphate + diphosphate</text>
        <dbReference type="Rhea" id="RHEA:49580"/>
        <dbReference type="ChEBI" id="CHEBI:33019"/>
        <dbReference type="ChEBI" id="CHEBI:59648"/>
        <dbReference type="ChEBI" id="CHEBI:131766"/>
        <dbReference type="EC" id="4.6.1.17"/>
    </reaction>
</comment>
<comment type="pathway">
    <text evidence="1">Cofactor biosynthesis; molybdopterin biosynthesis.</text>
</comment>
<comment type="subunit">
    <text evidence="1">Homohexamer; trimer of dimers.</text>
</comment>
<comment type="similarity">
    <text evidence="1">Belongs to the MoaC family.</text>
</comment>
<organism>
    <name type="scientific">Pseudomonas aeruginosa (strain UCBPP-PA14)</name>
    <dbReference type="NCBI Taxonomy" id="208963"/>
    <lineage>
        <taxon>Bacteria</taxon>
        <taxon>Pseudomonadati</taxon>
        <taxon>Pseudomonadota</taxon>
        <taxon>Gammaproteobacteria</taxon>
        <taxon>Pseudomonadales</taxon>
        <taxon>Pseudomonadaceae</taxon>
        <taxon>Pseudomonas</taxon>
    </lineage>
</organism>
<name>MOAC_PSEAB</name>